<gene>
    <name evidence="1" type="primary">ureD</name>
    <name type="ordered locus">Rfer_3376</name>
</gene>
<accession>Q21T18</accession>
<keyword id="KW-0143">Chaperone</keyword>
<keyword id="KW-0963">Cytoplasm</keyword>
<keyword id="KW-0996">Nickel insertion</keyword>
<keyword id="KW-1185">Reference proteome</keyword>
<evidence type="ECO:0000255" key="1">
    <source>
        <dbReference type="HAMAP-Rule" id="MF_01384"/>
    </source>
</evidence>
<comment type="function">
    <text evidence="1">Required for maturation of urease via the functional incorporation of the urease nickel metallocenter.</text>
</comment>
<comment type="subunit">
    <text evidence="1">UreD, UreF and UreG form a complex that acts as a GTP-hydrolysis-dependent molecular chaperone, activating the urease apoprotein by helping to assemble the nickel containing metallocenter of UreC. The UreE protein probably delivers the nickel.</text>
</comment>
<comment type="subcellular location">
    <subcellularLocation>
        <location evidence="1">Cytoplasm</location>
    </subcellularLocation>
</comment>
<comment type="similarity">
    <text evidence="1">Belongs to the UreD family.</text>
</comment>
<sequence length="276" mass="30226">MTWHATLSLDYRLESERSVLRHVHDGPLRVLKSLYPQGDGTCHNVLVHPPGGLVGGDTLDIQIAVGAGAHALITTPGATRFYRSSGEPAVQRTRLRLEALARMEWLPLEAILYSGCQAENHLSFELAPGAELIAWDVTALGLPHAGLPFVRGRFCQHIELPGVWLERGVIDAADTRLLGSPLGLAGQRCMASLFFVTGSALERPRRDLALDGARQILQAHALQSSAGVTCPNPRVVVLRVLAPQVEMAMDLLKKVWAVWRQVLWNQAAVQPRIWAM</sequence>
<name>URED_ALBFT</name>
<dbReference type="EMBL" id="CP000267">
    <property type="protein sequence ID" value="ABD71085.1"/>
    <property type="molecule type" value="Genomic_DNA"/>
</dbReference>
<dbReference type="RefSeq" id="WP_011465648.1">
    <property type="nucleotide sequence ID" value="NC_007908.1"/>
</dbReference>
<dbReference type="SMR" id="Q21T18"/>
<dbReference type="STRING" id="338969.Rfer_3376"/>
<dbReference type="KEGG" id="rfr:Rfer_3376"/>
<dbReference type="eggNOG" id="COG0829">
    <property type="taxonomic scope" value="Bacteria"/>
</dbReference>
<dbReference type="HOGENOM" id="CLU_056339_0_0_4"/>
<dbReference type="OrthoDB" id="9798842at2"/>
<dbReference type="Proteomes" id="UP000008332">
    <property type="component" value="Chromosome"/>
</dbReference>
<dbReference type="GO" id="GO:0005737">
    <property type="term" value="C:cytoplasm"/>
    <property type="evidence" value="ECO:0007669"/>
    <property type="project" value="UniProtKB-SubCell"/>
</dbReference>
<dbReference type="GO" id="GO:0016151">
    <property type="term" value="F:nickel cation binding"/>
    <property type="evidence" value="ECO:0007669"/>
    <property type="project" value="UniProtKB-UniRule"/>
</dbReference>
<dbReference type="HAMAP" id="MF_01384">
    <property type="entry name" value="UreD"/>
    <property type="match status" value="1"/>
</dbReference>
<dbReference type="InterPro" id="IPR002669">
    <property type="entry name" value="UreD"/>
</dbReference>
<dbReference type="PANTHER" id="PTHR33643">
    <property type="entry name" value="UREASE ACCESSORY PROTEIN D"/>
    <property type="match status" value="1"/>
</dbReference>
<dbReference type="PANTHER" id="PTHR33643:SF1">
    <property type="entry name" value="UREASE ACCESSORY PROTEIN D"/>
    <property type="match status" value="1"/>
</dbReference>
<dbReference type="Pfam" id="PF01774">
    <property type="entry name" value="UreD"/>
    <property type="match status" value="1"/>
</dbReference>
<organism>
    <name type="scientific">Albidiferax ferrireducens (strain ATCC BAA-621 / DSM 15236 / T118)</name>
    <name type="common">Rhodoferax ferrireducens</name>
    <dbReference type="NCBI Taxonomy" id="338969"/>
    <lineage>
        <taxon>Bacteria</taxon>
        <taxon>Pseudomonadati</taxon>
        <taxon>Pseudomonadota</taxon>
        <taxon>Betaproteobacteria</taxon>
        <taxon>Burkholderiales</taxon>
        <taxon>Comamonadaceae</taxon>
        <taxon>Rhodoferax</taxon>
    </lineage>
</organism>
<proteinExistence type="inferred from homology"/>
<protein>
    <recommendedName>
        <fullName evidence="1">Urease accessory protein UreD</fullName>
    </recommendedName>
</protein>
<feature type="chain" id="PRO_0000340508" description="Urease accessory protein UreD">
    <location>
        <begin position="1"/>
        <end position="276"/>
    </location>
</feature>
<reference key="1">
    <citation type="submission" date="2006-02" db="EMBL/GenBank/DDBJ databases">
        <title>Complete sequence of chromosome of Rhodoferax ferrireducens DSM 15236.</title>
        <authorList>
            <person name="Copeland A."/>
            <person name="Lucas S."/>
            <person name="Lapidus A."/>
            <person name="Barry K."/>
            <person name="Detter J.C."/>
            <person name="Glavina del Rio T."/>
            <person name="Hammon N."/>
            <person name="Israni S."/>
            <person name="Pitluck S."/>
            <person name="Brettin T."/>
            <person name="Bruce D."/>
            <person name="Han C."/>
            <person name="Tapia R."/>
            <person name="Gilna P."/>
            <person name="Kiss H."/>
            <person name="Schmutz J."/>
            <person name="Larimer F."/>
            <person name="Land M."/>
            <person name="Kyrpides N."/>
            <person name="Ivanova N."/>
            <person name="Richardson P."/>
        </authorList>
    </citation>
    <scope>NUCLEOTIDE SEQUENCE [LARGE SCALE GENOMIC DNA]</scope>
    <source>
        <strain>ATCC BAA-621 / DSM 15236 / T118</strain>
    </source>
</reference>